<keyword id="KW-0002">3D-structure</keyword>
<keyword id="KW-0106">Calcium</keyword>
<keyword id="KW-0119">Carbohydrate metabolism</keyword>
<keyword id="KW-0456">Lyase</keyword>
<keyword id="KW-0479">Metal-binding</keyword>
<keyword id="KW-0574">Periplasm</keyword>
<keyword id="KW-0732">Signal</keyword>
<evidence type="ECO:0000250" key="1">
    <source>
        <dbReference type="UniProtKB" id="C7S340"/>
    </source>
</evidence>
<evidence type="ECO:0000250" key="2">
    <source>
        <dbReference type="UniProtKB" id="Q8A2I1"/>
    </source>
</evidence>
<evidence type="ECO:0000255" key="3"/>
<evidence type="ECO:0000269" key="4">
    <source>
    </source>
</evidence>
<evidence type="ECO:0000269" key="5">
    <source>
    </source>
</evidence>
<evidence type="ECO:0000303" key="6">
    <source>
    </source>
</evidence>
<evidence type="ECO:0000303" key="7">
    <source>
    </source>
</evidence>
<evidence type="ECO:0000305" key="8"/>
<evidence type="ECO:0000312" key="9">
    <source>
        <dbReference type="EMBL" id="ABV21364.1"/>
    </source>
</evidence>
<evidence type="ECO:0007829" key="10">
    <source>
        <dbReference type="PDB" id="2Q1F"/>
    </source>
</evidence>
<gene>
    <name type="primary">chonabc</name>
</gene>
<sequence length="1014" mass="114921">MLILSFLCPAFLNAQIVTDERMFSFEEPQLPACITGVQSQLGISGAHYKDGKHSLEWTFEPNGRLELRKDLKFEKKDPTGKDLYLSAFIVWIYNEQPQDAAIEFEFLKDGRKCASFPFGINFKGWRAAWVCYERDMQGTPEEGMNELRIVAPDAKGRLFIDHLITATKVDARQQTADLQVPFVNAGTTNHWLVLYKHSLLKPDIELTPVSDKQRQEMKLLEKRFRDMIYTKGKVTEKEAETIRKKYDLYQITYKDGQVSGVPVFMVRASEAYERMIPDWDKDMLTKMGIEMRAYFDLMKRIAVAYNNSEAGSPIRKEMRRKFLAMYDHITDQGVAYGSCWGNIHHYGYSVRGLYPAYFLMKDVLREEGKLLEAERTLRWYAITNEVYPKPEGNGIDMDSFNTQTTGRIASILMMEDTPEKLQYLKSFSRWIDYGCRPAPGLAGSFKVDGGAFHHRNNYPAYAVGGLDGATNMIYLFSRTSLAVSELAHRTVKDVLLAMRFYCNKLNFPLSMSGRHPDGKGKLVPMHYAIMAIAGTPDGKGDFDKEMASAYLRLVSSDSSSAEQAPEYMPKVSNAQERKIAKRLVENGFRAEPDPQGNLSLGYGCVSVQRRENWSAVARGHSRYLWAAEHYLGHNLYGRYLAHGSLQILTAPPGQTVTPTTSGWQQEGFDWNRIPGVTSIHLPLDLLKANVLNVDTFSGMEEMLYSDEAFAGGLSQGKMNGNFGMKLHEHDKYNGTHRARKSFHFIDGMIVCLGSDIENTNMDYPTETTIFQLAVTDKAAHDYWKNNAGEGKVWMDHLGTGYYVPVAARFEKNFPQYSRMQDTGKETKGDWVSLIIDHGKAPKAGSYEYAILPGTDRKTMTAFAKKPAYSVLQQDRNAHILESPSDRITSYVLFETPQSLLPGGLLQRTDTSCLVMVRKESADKVLLTVAQPDLALYRGPSDEAFDKDGKRMERSIYSRPWIDNESGEIPVTVTLKGRWKVVETPYCKVVSEDKKQTVLRFLCKDGASYEVELEK</sequence>
<protein>
    <recommendedName>
        <fullName evidence="7 9">Chondroitin sulfate ABC exolyase</fullName>
        <ecNumber evidence="4 5">4.2.2.21</ecNumber>
    </recommendedName>
    <alternativeName>
        <fullName evidence="1">Chondroitin ABC exoeliminase</fullName>
    </alternativeName>
    <alternativeName>
        <fullName evidence="1 6">Chondroitin ABC lyase II</fullName>
    </alternativeName>
    <alternativeName>
        <fullName evidence="1 7">Chondroitin sulfate ABC lyase II</fullName>
        <shortName evidence="1">ChS ABC lyase II</shortName>
    </alternativeName>
    <alternativeName>
        <fullName evidence="1 6">Chondroitinase ABC II</fullName>
        <shortName evidence="1">cABC II</shortName>
    </alternativeName>
    <alternativeName>
        <fullName evidence="1">Exochondroitinase ABC</fullName>
    </alternativeName>
</protein>
<proteinExistence type="evidence at protein level"/>
<reference evidence="8" key="1">
    <citation type="journal article" date="2008" name="Biochemistry">
        <title>Characterization of chondroitin sulfate lyase ABC from Bacteroides thetaiotaomicron WAL2926.</title>
        <authorList>
            <person name="Shaya D."/>
            <person name="Hahn B.S."/>
            <person name="Park N.Y."/>
            <person name="Sim J.S."/>
            <person name="Kim Y.S."/>
            <person name="Cygler M."/>
        </authorList>
    </citation>
    <scope>NUCLEOTIDE SEQUENCE [GENOMIC DNA]</scope>
    <scope>FUNCTION</scope>
    <scope>CATALYTIC ACTIVITY</scope>
    <scope>COFACTOR</scope>
    <scope>SUBSTRATE SPECIFICITY</scope>
    <scope>ACTIVITY REGULATION</scope>
    <scope>BIOPHYSICOCHEMICAL PROPERTIES</scope>
    <scope>ACTIVE SITE RESIDUES</scope>
    <scope>MUTAGENESIS OF HIS-344; HIS-345; HIS-453; HIS-454; TYR-461 AND GLU-628</scope>
    <source>
        <strain evidence="5">ATCC 29741 / DSM 2255 / WAL 2926</strain>
    </source>
</reference>
<reference evidence="8 9" key="2">
    <citation type="journal article" date="2008" name="Glycobiology">
        <title>Composite active site of chondroitin lyase ABC accepting both epimers of uronic acid.</title>
        <authorList>
            <person name="Shaya D."/>
            <person name="Hahn B.S."/>
            <person name="Bjerkan T.M."/>
            <person name="Kim W.S."/>
            <person name="Park N.Y."/>
            <person name="Sim J.S."/>
            <person name="Kim Y.S."/>
            <person name="Cygler M."/>
        </authorList>
    </citation>
    <scope>NUCLEOTIDE SEQUENCE [GENOMIC DNA]</scope>
    <scope>CATALYTIC ACTIVITY</scope>
    <scope>COFACTOR</scope>
    <scope>ACTIVITY REGULATION</scope>
    <scope>BIOPHYSICOCHEMICAL PROPERTIES</scope>
    <scope>SUBUNIT</scope>
    <scope>ACTIVE SITE RESIDUES</scope>
    <scope>MUTAGENESIS OF ARG-172; GLN-173; ARG-267; HIS-344; HIS-345; HIS-453; HIS-454; TYR-461; ARG-514 AND GLU-628</scope>
    <scope>X-RAY CRYSTALLOGRAPHY (2.85 ANGSTROMS) IN COMPLEX WITH CALCIUM</scope>
    <source>
        <strain evidence="9">ATCC 29741 / DSM 2255 / WAL 2926</strain>
    </source>
</reference>
<accession>C5G6D7</accession>
<comment type="function">
    <text evidence="5">Broad-specificity glycosaminoglycan lyase, which acts in an exolytic fashion degrading chondroitin sulfates and dermatan sulfate to yield only disaccharide products. Has a preference for chondroitin 4-sulfate over chondroitin 6-sulfate. Has extremely low activity against hyaluronic acid. Is not active against acharan sulfate, heparin or heparan sulfate.</text>
</comment>
<comment type="catalytic activity">
    <reaction evidence="4 5">
        <text>Exolytic removal of Delta(4)-unsaturated disaccharide residues from the non-reducing ends of both polymeric chondroitin/dermatan sulfates and their oligosaccharide fragments.</text>
        <dbReference type="EC" id="4.2.2.21"/>
    </reaction>
</comment>
<comment type="cofactor">
    <cofactor evidence="4 5">
        <name>Ca(2+)</name>
        <dbReference type="ChEBI" id="CHEBI:29108"/>
    </cofactor>
    <cofactor evidence="4 5">
        <name>Mg(2+)</name>
        <dbReference type="ChEBI" id="CHEBI:18420"/>
    </cofactor>
    <text evidence="4 5">Divalent metal cation. Requires divalent metal cation for binding of dermatan sulfate substrate, whereas it is not necessary for the binding of chondroitin sulfate substrates. Prefers Ca(2+) or Mg(2+), binding 1 ion per subunit.</text>
</comment>
<comment type="activity regulation">
    <text evidence="4 5">Specific activity for chondroitin sulfate substrates increases moderately (2-fold) while an increase of 25-fold is observed for dermatan sulfate as substrate upon addition of Ca(2+) or Mg(2+) ions (PubMed:18227125). Increasing the concentration of Na(+), K(+) or Cs(+) chloride from 0 to 0.1 M, increases the activity against all substrates. Further increases in salt concentration reduces the activity dramatically, with 50% inhibition occurring at 0.15 M and nearly complete inhibition at 0.4 M salt. The addition of 10 mM Ca(2+) or Mg(2+) ions increases the activity against chondroitin 4- and 6-sulfates by 2-3-fold, while the activity against dermatan sulfate increases much more significantly by 50-fold (PubMed:18512954). Addition of Mn(2+) and Zn(2+) reduces activity against chondroitin sulfate substrates, but increases the activity against dermatan sulfate. Increasing the concentration of CaCl(2) with both chondroitin 4- and 6-sulfates from 0 to 0.04 M increases the activity. A further increase reduces activity, with 50% inhibition at 0.065-0.085 M and a complete inhibition of the reaction at 0.2 M. In case of dermatan sulfate, the addition of low concentration of CaCl(2) dramatically increases the activity from the basal level. The maximal activity is reached at 0.01 M CaCl(2).</text>
</comment>
<comment type="biophysicochemical properties">
    <kinetics>
        <KM evidence="4 5">67 uM for chondroitin 4-sulfate from porcine or bovine trachea (at 37 degrees Celsius and pH 7.6)</KM>
        <KM evidence="4 5">33 uM for chondroitin 6-sulfate from shark cartilage (at 37 degrees Celsius and pH 7.6)</KM>
        <KM evidence="4 5">61 uM for dermatan sulfate from porcine intestinal mucosa (at 37 degrees Celsius and pH 7.6)</KM>
        <Vmax evidence="4 5">77.6 umol/min/mg enzyme with chondroitin 4-sulfate from bovine trachea as substrate (at 37 degrees Celsius and in 50 mM phosphate at pH 7.6)</Vmax>
        <Vmax evidence="4 5">47.4 umol/min/mg enzyme with chondroitin 6-sulfate from shark cartilage as substrate (at 37 degrees Celsius and in 50 mM phosphate at pH 7.6)</Vmax>
        <Vmax evidence="4 5">14.4 umol/min/mg enzyme with chondroitin 2,6-sulfate from skate cartilage as substrate (at 37 degrees Celsius and in 50 mM phosphate at pH 7.6)</Vmax>
        <Vmax evidence="4 5">28.5 umol/min/mg enzyme with chondroitin 4,6-sulfate from squid cartilage as substrate (at 37 degrees Celsius and in 50 mM phosphate at pH 7.6)</Vmax>
        <Vmax evidence="4 5">9.1 umol/min/mg enzyme with dermatan sulfate from porcine intestinal mucosa as substrate (at 37 degrees Celsius and in 50 mM phosphate at pH 7.6)</Vmax>
        <text evidence="4 5">kcat is 15792 min(-1) with chondroitin 4-sulfate from porcine or bovine trachea as substrate. kcat is 10404 min(-1) with chondroitin 6-sulfate from shark cartilage as substrate. kcat is 2307 min(-1) with dermatan sulfate from porcine intestinal mucosa as substrate.</text>
    </kinetics>
    <phDependence>
        <text evidence="4 5">Optimum pH is 7.6. Decreased activity at pH values below 7.0 and above 8.0. The activity against chondroitin 6-sulfate remains higher than with other substrates at low pH. At pH 6.5 the enzyme exhibits almost 60% of its maximal activity against chondroitin 6-sulfate, only 20% activity against chondroitin 4-sulfate and no measurable activity against dermatan sulfate. In contrast, at pH of 8.5 about 30% of enzyme's maximal activity against all substrates is displayed.</text>
    </phDependence>
    <temperatureDependence>
        <text evidence="4 5">Optimum temperature is 37 degrees Celsius. No significant reduction in activity at temperatures in the range of 25-40 degrees Celsius. At 50 degrees Celsius, activity of 45% for dermatan sulfate, 60% for chondroitin 4-sulfate and 75% for chondroitin 6-sulfate is detected. Thermal denaturation curve is bimodal with two consecutive thermal denaturation midpoints (Tm) corresponding to 44 and 50 degrees Celsius, respectively.</text>
    </temperatureDependence>
</comment>
<comment type="subunit">
    <text evidence="4">Monomer.</text>
</comment>
<comment type="subcellular location">
    <subcellularLocation>
        <location evidence="2">Periplasm</location>
    </subcellularLocation>
</comment>
<comment type="similarity">
    <text evidence="3">Belongs to the polysaccharide lyase 8 family.</text>
</comment>
<comment type="sequence caution" evidence="8">
    <conflict type="miscellaneous discrepancy">
        <sequence resource="EMBL-CDS" id="ABV21364"/>
    </conflict>
    <text>Cloning artifact.</text>
</comment>
<dbReference type="EC" id="4.2.2.21" evidence="4 5"/>
<dbReference type="EMBL" id="EF639172">
    <property type="protein sequence ID" value="ABV21364.1"/>
    <property type="status" value="ALT_SEQ"/>
    <property type="molecule type" value="Genomic_DNA"/>
</dbReference>
<dbReference type="PDB" id="2Q1F">
    <property type="method" value="X-ray"/>
    <property type="resolution" value="2.85 A"/>
    <property type="chains" value="A/B=1-1014"/>
</dbReference>
<dbReference type="PDBsum" id="2Q1F"/>
<dbReference type="SMR" id="C5G6D7"/>
<dbReference type="CAZy" id="PL8">
    <property type="family name" value="Polysaccharide Lyase Family 8"/>
</dbReference>
<dbReference type="SABIO-RK" id="C5G6D7"/>
<dbReference type="EvolutionaryTrace" id="C5G6D7"/>
<dbReference type="GO" id="GO:0005576">
    <property type="term" value="C:extracellular region"/>
    <property type="evidence" value="ECO:0007669"/>
    <property type="project" value="InterPro"/>
</dbReference>
<dbReference type="GO" id="GO:0042597">
    <property type="term" value="C:periplasmic space"/>
    <property type="evidence" value="ECO:0000250"/>
    <property type="project" value="UniProtKB"/>
</dbReference>
<dbReference type="GO" id="GO:0005509">
    <property type="term" value="F:calcium ion binding"/>
    <property type="evidence" value="ECO:0000314"/>
    <property type="project" value="UniProtKB"/>
</dbReference>
<dbReference type="GO" id="GO:0030246">
    <property type="term" value="F:carbohydrate binding"/>
    <property type="evidence" value="ECO:0007669"/>
    <property type="project" value="InterPro"/>
</dbReference>
<dbReference type="GO" id="GO:0034000">
    <property type="term" value="F:chondroitin-sulfate-ABC endolyase activity"/>
    <property type="evidence" value="ECO:0007669"/>
    <property type="project" value="InterPro"/>
</dbReference>
<dbReference type="GO" id="GO:0034001">
    <property type="term" value="F:chondroitin-sulfate-ABC exolyase activity"/>
    <property type="evidence" value="ECO:0000314"/>
    <property type="project" value="UniProtKB"/>
</dbReference>
<dbReference type="GO" id="GO:0000287">
    <property type="term" value="F:magnesium ion binding"/>
    <property type="evidence" value="ECO:0000314"/>
    <property type="project" value="UniProtKB"/>
</dbReference>
<dbReference type="GO" id="GO:0005975">
    <property type="term" value="P:carbohydrate metabolic process"/>
    <property type="evidence" value="ECO:0007669"/>
    <property type="project" value="InterPro"/>
</dbReference>
<dbReference type="GO" id="GO:0030209">
    <property type="term" value="P:dermatan sulfate proteoglycan catabolic process"/>
    <property type="evidence" value="ECO:0000314"/>
    <property type="project" value="UniProtKB"/>
</dbReference>
<dbReference type="GO" id="GO:0006027">
    <property type="term" value="P:glycosaminoglycan catabolic process"/>
    <property type="evidence" value="ECO:0000314"/>
    <property type="project" value="UniProtKB"/>
</dbReference>
<dbReference type="CDD" id="cd01083">
    <property type="entry name" value="GAG_Lyase"/>
    <property type="match status" value="1"/>
</dbReference>
<dbReference type="Gene3D" id="2.70.98.10">
    <property type="match status" value="1"/>
</dbReference>
<dbReference type="Gene3D" id="1.50.10.100">
    <property type="entry name" value="Chondroitin AC/alginate lyase"/>
    <property type="match status" value="1"/>
</dbReference>
<dbReference type="Gene3D" id="2.60.120.430">
    <property type="entry name" value="Galactose-binding lectin"/>
    <property type="match status" value="1"/>
</dbReference>
<dbReference type="Gene3D" id="2.60.220.10">
    <property type="entry name" value="Polysaccharide lyase family 8-like, C-terminal"/>
    <property type="match status" value="1"/>
</dbReference>
<dbReference type="InterPro" id="IPR039174">
    <property type="entry name" value="Chondroitin_ABC_lyase"/>
</dbReference>
<dbReference type="InterPro" id="IPR008929">
    <property type="entry name" value="Chondroitin_lyas"/>
</dbReference>
<dbReference type="InterPro" id="IPR024200">
    <property type="entry name" value="Chondroitinase_ABC_I"/>
</dbReference>
<dbReference type="InterPro" id="IPR011013">
    <property type="entry name" value="Gal_mutarotase_sf_dom"/>
</dbReference>
<dbReference type="InterPro" id="IPR008979">
    <property type="entry name" value="Galactose-bd-like_sf"/>
</dbReference>
<dbReference type="InterPro" id="IPR014718">
    <property type="entry name" value="GH-type_carb-bd"/>
</dbReference>
<dbReference type="InterPro" id="IPR011071">
    <property type="entry name" value="Lyase_8-like_C"/>
</dbReference>
<dbReference type="InterPro" id="IPR003159">
    <property type="entry name" value="Lyase_8_central_dom"/>
</dbReference>
<dbReference type="InterPro" id="IPR015177">
    <property type="entry name" value="Lyase_catalyt"/>
</dbReference>
<dbReference type="InterPro" id="IPR015176">
    <property type="entry name" value="Lyase_N"/>
</dbReference>
<dbReference type="PANTHER" id="PTHR37322">
    <property type="match status" value="1"/>
</dbReference>
<dbReference type="PANTHER" id="PTHR37322:SF3">
    <property type="entry name" value="CHONDROITIN SULFATE ABC EXOLYASE"/>
    <property type="match status" value="1"/>
</dbReference>
<dbReference type="Pfam" id="PF02278">
    <property type="entry name" value="Lyase_8"/>
    <property type="match status" value="1"/>
</dbReference>
<dbReference type="Pfam" id="PF09093">
    <property type="entry name" value="Lyase_catalyt"/>
    <property type="match status" value="1"/>
</dbReference>
<dbReference type="Pfam" id="PF09092">
    <property type="entry name" value="Lyase_N"/>
    <property type="match status" value="1"/>
</dbReference>
<dbReference type="PIRSF" id="PIRSF034515">
    <property type="entry name" value="Chondroitinase"/>
    <property type="match status" value="1"/>
</dbReference>
<dbReference type="SUPFAM" id="SSF48230">
    <property type="entry name" value="Chondroitin AC/alginate lyase"/>
    <property type="match status" value="1"/>
</dbReference>
<dbReference type="SUPFAM" id="SSF74650">
    <property type="entry name" value="Galactose mutarotase-like"/>
    <property type="match status" value="1"/>
</dbReference>
<dbReference type="SUPFAM" id="SSF49785">
    <property type="entry name" value="Galactose-binding domain-like"/>
    <property type="match status" value="1"/>
</dbReference>
<dbReference type="SUPFAM" id="SSF49863">
    <property type="entry name" value="Hyaluronate lyase-like, C-terminal domain"/>
    <property type="match status" value="1"/>
</dbReference>
<organism>
    <name type="scientific">Bacteroides thetaiotaomicron</name>
    <dbReference type="NCBI Taxonomy" id="818"/>
    <lineage>
        <taxon>Bacteria</taxon>
        <taxon>Pseudomonadati</taxon>
        <taxon>Bacteroidota</taxon>
        <taxon>Bacteroidia</taxon>
        <taxon>Bacteroidales</taxon>
        <taxon>Bacteroidaceae</taxon>
        <taxon>Bacteroides</taxon>
    </lineage>
</organism>
<name>CABC2_BACT4</name>
<feature type="signal peptide" evidence="3">
    <location>
        <begin position="1"/>
        <end position="14"/>
    </location>
</feature>
<feature type="chain" id="PRO_0000420123" description="Chondroitin sulfate ABC exolyase" evidence="3">
    <location>
        <begin position="15"/>
        <end position="1014"/>
    </location>
</feature>
<feature type="active site" description="Proton acceptor" evidence="4 5">
    <location>
        <position position="345"/>
    </location>
</feature>
<feature type="active site" description="Proton acceptor" evidence="4 5">
    <location>
        <position position="454"/>
    </location>
</feature>
<feature type="active site" description="Proton donor" evidence="4 5">
    <location>
        <position position="461"/>
    </location>
</feature>
<feature type="binding site" evidence="4">
    <location>
        <position position="24"/>
    </location>
    <ligand>
        <name>Ca(2+)</name>
        <dbReference type="ChEBI" id="CHEBI:29108"/>
    </ligand>
</feature>
<feature type="binding site" evidence="4">
    <location>
        <position position="26"/>
    </location>
    <ligand>
        <name>Ca(2+)</name>
        <dbReference type="ChEBI" id="CHEBI:29108"/>
    </ligand>
</feature>
<feature type="binding site" evidence="4">
    <location>
        <position position="50"/>
    </location>
    <ligand>
        <name>Ca(2+)</name>
        <dbReference type="ChEBI" id="CHEBI:29108"/>
    </ligand>
</feature>
<feature type="binding site" evidence="4">
    <location>
        <position position="53"/>
    </location>
    <ligand>
        <name>Ca(2+)</name>
        <dbReference type="ChEBI" id="CHEBI:29108"/>
    </ligand>
</feature>
<feature type="binding site" evidence="4">
    <location>
        <position position="161"/>
    </location>
    <ligand>
        <name>Ca(2+)</name>
        <dbReference type="ChEBI" id="CHEBI:29108"/>
    </ligand>
</feature>
<feature type="site" description="Important for catalytic activity against all substrates" evidence="4">
    <location>
        <position position="172"/>
    </location>
</feature>
<feature type="site" description="Important for catalytic activity against dermatan sulfate substrate" evidence="4 5">
    <location>
        <position position="344"/>
    </location>
</feature>
<feature type="site" description="Transition state stabilizer" evidence="4">
    <location>
        <position position="514"/>
    </location>
</feature>
<feature type="site" description="Important for catalytic activity against all substrates" evidence="4 5">
    <location>
        <position position="628"/>
    </location>
</feature>
<feature type="mutagenesis site" description="Loss of activity against all substrates." evidence="4">
    <original>R</original>
    <variation>A</variation>
    <location>
        <position position="172"/>
    </location>
</feature>
<feature type="mutagenesis site" description="Reduced activity against all substrates by a factor of about 2-10." evidence="4">
    <original>Q</original>
    <variation>A</variation>
    <location>
        <position position="173"/>
    </location>
</feature>
<feature type="mutagenesis site" description="Reduced activity against all substrates by a factor of about 2-10." evidence="4">
    <original>R</original>
    <variation>A</variation>
    <location>
        <position position="267"/>
    </location>
</feature>
<feature type="mutagenesis site" description="No detectable activity against dermatan sulfate in the standard assay, but after overnight incubation shows traces of degradation products, also still degrades chondroitin sulfate albeit with 10- to 30-fold lower catalytic efficiency." evidence="4 5">
    <original>H</original>
    <variation>A</variation>
    <location>
        <position position="344"/>
    </location>
</feature>
<feature type="mutagenesis site" description="Loss of activity against all substrates." evidence="4 5">
    <original>H</original>
    <variation>D</variation>
    <variation>E</variation>
    <location>
        <position position="344"/>
    </location>
</feature>
<feature type="mutagenesis site" description="Retains 5-25% catalytic efficiency against all substrates." evidence="4 5">
    <original>H</original>
    <variation>N</variation>
    <location>
        <position position="344"/>
    </location>
</feature>
<feature type="mutagenesis site" description="Retains 5% catalytic efficiency against chondroitin 4-sulfate only." evidence="4 5">
    <original>H</original>
    <variation>Q</variation>
    <location>
        <position position="344"/>
    </location>
</feature>
<feature type="mutagenesis site" description="No activity against dermatan sulfate even after overnight incubation, but still degrades chondroitin sulfate albeit with 10- to 30-fold lower catalytic efficiency." evidence="4 5">
    <original>H</original>
    <variation>A</variation>
    <location>
        <position position="345"/>
    </location>
</feature>
<feature type="mutagenesis site" description="Loss of activity against all substrates." evidence="4 5">
    <original>H</original>
    <variation>D</variation>
    <variation>E</variation>
    <location>
        <position position="345"/>
    </location>
</feature>
<feature type="mutagenesis site" description="Low levels of activity against chondroitin sulfate substrates, but no activity against dermatan sulfate." evidence="4 5">
    <original>H</original>
    <variation>N</variation>
    <variation>Q</variation>
    <location>
        <position position="345"/>
    </location>
</feature>
<feature type="mutagenesis site" description="Slightly reduced activity against all substrates." evidence="4 5">
    <original>H</original>
    <variation>A</variation>
    <location>
        <position position="453"/>
    </location>
</feature>
<feature type="mutagenesis site" description="Shows no activity against dermatan sulfate while retaining about 10% of its catalytic efficiency against chondroitin 4- and 6-sulfates." evidence="4 5">
    <original>H</original>
    <variation>N</variation>
    <location>
        <position position="453"/>
    </location>
</feature>
<feature type="mutagenesis site" description="Loss of activity against all substrates." evidence="4 5">
    <original>H</original>
    <variation>A</variation>
    <variation>D</variation>
    <variation>N</variation>
    <variation>Q</variation>
    <location>
        <position position="454"/>
    </location>
</feature>
<feature type="mutagenesis site" description="Loss of activity against all substrates." evidence="4 5">
    <original>Y</original>
    <variation>A</variation>
    <location>
        <position position="461"/>
    </location>
</feature>
<feature type="mutagenesis site" description="Loss of activity against all substrates." evidence="4">
    <original>R</original>
    <variation>A</variation>
    <location>
        <position position="514"/>
    </location>
</feature>
<feature type="mutagenesis site" description="Loss of activity against all substrates." evidence="4 5">
    <original>E</original>
    <variation>A</variation>
    <variation>D</variation>
    <location>
        <position position="628"/>
    </location>
</feature>
<feature type="mutagenesis site" description="Retains low levels of activity against chondroitin sulfate substrates, but not against dermatan sulfate as substrate." evidence="4 5">
    <original>E</original>
    <variation>Q</variation>
    <location>
        <position position="628"/>
    </location>
</feature>
<feature type="strand" evidence="10">
    <location>
        <begin position="27"/>
        <end position="29"/>
    </location>
</feature>
<feature type="strand" evidence="10">
    <location>
        <begin position="34"/>
        <end position="46"/>
    </location>
</feature>
<feature type="strand" evidence="10">
    <location>
        <begin position="54"/>
        <end position="67"/>
    </location>
</feature>
<feature type="strand" evidence="10">
    <location>
        <begin position="85"/>
        <end position="96"/>
    </location>
</feature>
<feature type="strand" evidence="10">
    <location>
        <begin position="99"/>
        <end position="108"/>
    </location>
</feature>
<feature type="strand" evidence="10">
    <location>
        <begin position="111"/>
        <end position="119"/>
    </location>
</feature>
<feature type="strand" evidence="10">
    <location>
        <begin position="123"/>
        <end position="131"/>
    </location>
</feature>
<feature type="turn" evidence="10">
    <location>
        <begin position="132"/>
        <end position="135"/>
    </location>
</feature>
<feature type="strand" evidence="10">
    <location>
        <begin position="136"/>
        <end position="138"/>
    </location>
</feature>
<feature type="strand" evidence="10">
    <location>
        <begin position="146"/>
        <end position="150"/>
    </location>
</feature>
<feature type="strand" evidence="10">
    <location>
        <begin position="156"/>
        <end position="169"/>
    </location>
</feature>
<feature type="turn" evidence="10">
    <location>
        <begin position="181"/>
        <end position="186"/>
    </location>
</feature>
<feature type="turn" evidence="10">
    <location>
        <begin position="190"/>
        <end position="192"/>
    </location>
</feature>
<feature type="helix" evidence="10">
    <location>
        <begin position="194"/>
        <end position="198"/>
    </location>
</feature>
<feature type="helix" evidence="10">
    <location>
        <begin position="211"/>
        <end position="228"/>
    </location>
</feature>
<feature type="helix" evidence="10">
    <location>
        <begin position="236"/>
        <end position="247"/>
    </location>
</feature>
<feature type="strand" evidence="10">
    <location>
        <begin position="252"/>
        <end position="254"/>
    </location>
</feature>
<feature type="strand" evidence="10">
    <location>
        <begin position="257"/>
        <end position="259"/>
    </location>
</feature>
<feature type="helix" evidence="10">
    <location>
        <begin position="266"/>
        <end position="271"/>
    </location>
</feature>
<feature type="turn" evidence="10">
    <location>
        <begin position="273"/>
        <end position="275"/>
    </location>
</feature>
<feature type="helix" evidence="10">
    <location>
        <begin position="283"/>
        <end position="286"/>
    </location>
</feature>
<feature type="helix" evidence="10">
    <location>
        <begin position="291"/>
        <end position="306"/>
    </location>
</feature>
<feature type="helix" evidence="10">
    <location>
        <begin position="313"/>
        <end position="332"/>
    </location>
</feature>
<feature type="helix" evidence="10">
    <location>
        <begin position="346"/>
        <end position="348"/>
    </location>
</feature>
<feature type="turn" evidence="10">
    <location>
        <begin position="349"/>
        <end position="352"/>
    </location>
</feature>
<feature type="helix" evidence="10">
    <location>
        <begin position="353"/>
        <end position="358"/>
    </location>
</feature>
<feature type="helix" evidence="10">
    <location>
        <begin position="361"/>
        <end position="366"/>
    </location>
</feature>
<feature type="helix" evidence="10">
    <location>
        <begin position="370"/>
        <end position="380"/>
    </location>
</feature>
<feature type="helix" evidence="10">
    <location>
        <begin position="383"/>
        <end position="386"/>
    </location>
</feature>
<feature type="strand" evidence="10">
    <location>
        <begin position="391"/>
        <end position="393"/>
    </location>
</feature>
<feature type="helix" evidence="10">
    <location>
        <begin position="397"/>
        <end position="402"/>
    </location>
</feature>
<feature type="helix" evidence="10">
    <location>
        <begin position="404"/>
        <end position="412"/>
    </location>
</feature>
<feature type="helix" evidence="10">
    <location>
        <begin position="418"/>
        <end position="435"/>
    </location>
</feature>
<feature type="strand" evidence="10">
    <location>
        <begin position="443"/>
        <end position="445"/>
    </location>
</feature>
<feature type="strand" evidence="10">
    <location>
        <begin position="451"/>
        <end position="453"/>
    </location>
</feature>
<feature type="helix" evidence="10">
    <location>
        <begin position="459"/>
        <end position="476"/>
    </location>
</feature>
<feature type="helix" evidence="10">
    <location>
        <begin position="485"/>
        <end position="501"/>
    </location>
</feature>
<feature type="strand" evidence="10">
    <location>
        <begin position="502"/>
        <end position="506"/>
    </location>
</feature>
<feature type="helix" evidence="10">
    <location>
        <begin position="509"/>
        <end position="511"/>
    </location>
</feature>
<feature type="helix" evidence="10">
    <location>
        <begin position="524"/>
        <end position="531"/>
    </location>
</feature>
<feature type="helix" evidence="10">
    <location>
        <begin position="544"/>
        <end position="553"/>
    </location>
</feature>
<feature type="helix" evidence="10">
    <location>
        <begin position="574"/>
        <end position="585"/>
    </location>
</feature>
<feature type="strand" evidence="10">
    <location>
        <begin position="596"/>
        <end position="600"/>
    </location>
</feature>
<feature type="turn" evidence="10">
    <location>
        <begin position="601"/>
        <end position="604"/>
    </location>
</feature>
<feature type="strand" evidence="10">
    <location>
        <begin position="605"/>
        <end position="610"/>
    </location>
</feature>
<feature type="strand" evidence="10">
    <location>
        <begin position="613"/>
        <end position="618"/>
    </location>
</feature>
<feature type="strand" evidence="10">
    <location>
        <begin position="622"/>
        <end position="624"/>
    </location>
</feature>
<feature type="strand" evidence="10">
    <location>
        <begin position="628"/>
        <end position="630"/>
    </location>
</feature>
<feature type="turn" evidence="10">
    <location>
        <begin position="638"/>
        <end position="641"/>
    </location>
</feature>
<feature type="strand" evidence="10">
    <location>
        <begin position="642"/>
        <end position="648"/>
    </location>
</feature>
<feature type="turn" evidence="10">
    <location>
        <begin position="658"/>
        <end position="662"/>
    </location>
</feature>
<feature type="strand" evidence="10">
    <location>
        <begin position="677"/>
        <end position="679"/>
    </location>
</feature>
<feature type="helix" evidence="10">
    <location>
        <begin position="683"/>
        <end position="686"/>
    </location>
</feature>
<feature type="strand" evidence="10">
    <location>
        <begin position="699"/>
        <end position="702"/>
    </location>
</feature>
<feature type="strand" evidence="10">
    <location>
        <begin position="710"/>
        <end position="715"/>
    </location>
</feature>
<feature type="turn" evidence="10">
    <location>
        <begin position="716"/>
        <end position="718"/>
    </location>
</feature>
<feature type="strand" evidence="10">
    <location>
        <begin position="719"/>
        <end position="727"/>
    </location>
</feature>
<feature type="strand" evidence="10">
    <location>
        <begin position="737"/>
        <end position="745"/>
    </location>
</feature>
<feature type="strand" evidence="10">
    <location>
        <begin position="748"/>
        <end position="757"/>
    </location>
</feature>
<feature type="strand" evidence="10">
    <location>
        <begin position="761"/>
        <end position="773"/>
    </location>
</feature>
<feature type="helix" evidence="10">
    <location>
        <begin position="777"/>
        <end position="782"/>
    </location>
</feature>
<feature type="strand" evidence="10">
    <location>
        <begin position="790"/>
        <end position="794"/>
    </location>
</feature>
<feature type="strand" evidence="10">
    <location>
        <begin position="800"/>
        <end position="802"/>
    </location>
</feature>
<feature type="strand" evidence="10">
    <location>
        <begin position="808"/>
        <end position="818"/>
    </location>
</feature>
<feature type="turn" evidence="10">
    <location>
        <begin position="820"/>
        <end position="822"/>
    </location>
</feature>
<feature type="strand" evidence="10">
    <location>
        <begin position="825"/>
        <end position="840"/>
    </location>
</feature>
<feature type="strand" evidence="10">
    <location>
        <begin position="842"/>
        <end position="853"/>
    </location>
</feature>
<feature type="helix" evidence="10">
    <location>
        <begin position="856"/>
        <end position="864"/>
    </location>
</feature>
<feature type="strand" evidence="10">
    <location>
        <begin position="869"/>
        <end position="882"/>
    </location>
</feature>
<feature type="turn" evidence="10">
    <location>
        <begin position="883"/>
        <end position="886"/>
    </location>
</feature>
<feature type="strand" evidence="10">
    <location>
        <begin position="887"/>
        <end position="894"/>
    </location>
</feature>
<feature type="strand" evidence="10">
    <location>
        <begin position="903"/>
        <end position="929"/>
    </location>
</feature>
<feature type="strand" evidence="10">
    <location>
        <begin position="946"/>
        <end position="948"/>
    </location>
</feature>
<feature type="helix" evidence="10">
    <location>
        <begin position="955"/>
        <end position="957"/>
    </location>
</feature>
<feature type="turn" evidence="10">
    <location>
        <begin position="959"/>
        <end position="962"/>
    </location>
</feature>
<feature type="strand" evidence="10">
    <location>
        <begin position="968"/>
        <end position="976"/>
    </location>
</feature>
<feature type="strand" evidence="10">
    <location>
        <begin position="986"/>
        <end position="991"/>
    </location>
</feature>
<feature type="strand" evidence="10">
    <location>
        <begin position="993"/>
        <end position="1002"/>
    </location>
</feature>
<feature type="strand" evidence="10">
    <location>
        <begin position="1007"/>
        <end position="1013"/>
    </location>
</feature>